<proteinExistence type="inferred from homology"/>
<comment type="function">
    <text evidence="1">Catalyzes the ATP-dependent phosphorylation of N-acetyl-L-glutamate.</text>
</comment>
<comment type="catalytic activity">
    <reaction evidence="1">
        <text>N-acetyl-L-glutamate + ATP = N-acetyl-L-glutamyl 5-phosphate + ADP</text>
        <dbReference type="Rhea" id="RHEA:14629"/>
        <dbReference type="ChEBI" id="CHEBI:30616"/>
        <dbReference type="ChEBI" id="CHEBI:44337"/>
        <dbReference type="ChEBI" id="CHEBI:57936"/>
        <dbReference type="ChEBI" id="CHEBI:456216"/>
        <dbReference type="EC" id="2.7.2.8"/>
    </reaction>
</comment>
<comment type="pathway">
    <text evidence="1">Amino-acid biosynthesis; L-arginine biosynthesis; N(2)-acetyl-L-ornithine from L-glutamate: step 2/4.</text>
</comment>
<comment type="subcellular location">
    <subcellularLocation>
        <location evidence="1">Cytoplasm</location>
    </subcellularLocation>
</comment>
<comment type="similarity">
    <text evidence="1">Belongs to the acetylglutamate kinase family. ArgB subfamily.</text>
</comment>
<sequence>MGKTIVFKCGGSVIRELSDEFFQNLKDLTESGWKIALVHGGGPDITKMLKKLNIRTEFVNGQRKTTKAVLEVAEMVLSGSINKFFVAELTKHGLPAVGVSGKDGGLLLADYLNEKEYGQVGRIKKVNGQMAEALMEKGFIPVIAPLSMTDGCETLNVNADLAASAVAAALRADKLMFVTDVKGIMKNEEMLKELTPEDIESLIAEGVISGGMIPKVHSAKEALTDEVEEVMIVSGKGSFLTKDDFIGTKIIKQKEAVS</sequence>
<keyword id="KW-0028">Amino-acid biosynthesis</keyword>
<keyword id="KW-0055">Arginine biosynthesis</keyword>
<keyword id="KW-0067">ATP-binding</keyword>
<keyword id="KW-0963">Cytoplasm</keyword>
<keyword id="KW-0418">Kinase</keyword>
<keyword id="KW-0547">Nucleotide-binding</keyword>
<keyword id="KW-1185">Reference proteome</keyword>
<keyword id="KW-0808">Transferase</keyword>
<gene>
    <name evidence="1" type="primary">argB</name>
    <name type="ordered locus">BLi01208</name>
    <name type="ordered locus">BL03243</name>
</gene>
<reference key="1">
    <citation type="journal article" date="2004" name="J. Mol. Microbiol. Biotechnol.">
        <title>The complete genome sequence of Bacillus licheniformis DSM13, an organism with great industrial potential.</title>
        <authorList>
            <person name="Veith B."/>
            <person name="Herzberg C."/>
            <person name="Steckel S."/>
            <person name="Feesche J."/>
            <person name="Maurer K.H."/>
            <person name="Ehrenreich P."/>
            <person name="Baeumer S."/>
            <person name="Henne A."/>
            <person name="Liesegang H."/>
            <person name="Merkl R."/>
            <person name="Ehrenreich A."/>
            <person name="Gottschalk G."/>
        </authorList>
    </citation>
    <scope>NUCLEOTIDE SEQUENCE [LARGE SCALE GENOMIC DNA]</scope>
    <source>
        <strain>ATCC 14580 / DSM 13 / JCM 2505 / CCUG 7422 / NBRC 12200 / NCIMB 9375 / NCTC 10341 / NRRL NRS-1264 / Gibson 46</strain>
    </source>
</reference>
<reference key="2">
    <citation type="journal article" date="2004" name="Genome Biol.">
        <title>Complete genome sequence of the industrial bacterium Bacillus licheniformis and comparisons with closely related Bacillus species.</title>
        <authorList>
            <person name="Rey M.W."/>
            <person name="Ramaiya P."/>
            <person name="Nelson B.A."/>
            <person name="Brody-Karpin S.D."/>
            <person name="Zaretsky E.J."/>
            <person name="Tang M."/>
            <person name="Lopez de Leon A."/>
            <person name="Xiang H."/>
            <person name="Gusti V."/>
            <person name="Clausen I.G."/>
            <person name="Olsen P.B."/>
            <person name="Rasmussen M.D."/>
            <person name="Andersen J.T."/>
            <person name="Joergensen P.L."/>
            <person name="Larsen T.S."/>
            <person name="Sorokin A."/>
            <person name="Bolotin A."/>
            <person name="Lapidus A."/>
            <person name="Galleron N."/>
            <person name="Ehrlich S.D."/>
            <person name="Berka R.M."/>
        </authorList>
    </citation>
    <scope>NUCLEOTIDE SEQUENCE [LARGE SCALE GENOMIC DNA]</scope>
    <source>
        <strain>ATCC 14580 / DSM 13 / JCM 2505 / CCUG 7422 / NBRC 12200 / NCIMB 9375 / NCTC 10341 / NRRL NRS-1264 / Gibson 46</strain>
    </source>
</reference>
<evidence type="ECO:0000255" key="1">
    <source>
        <dbReference type="HAMAP-Rule" id="MF_00082"/>
    </source>
</evidence>
<organism>
    <name type="scientific">Bacillus licheniformis (strain ATCC 14580 / DSM 13 / JCM 2505 / CCUG 7422 / NBRC 12200 / NCIMB 9375 / NCTC 10341 / NRRL NRS-1264 / Gibson 46)</name>
    <dbReference type="NCBI Taxonomy" id="279010"/>
    <lineage>
        <taxon>Bacteria</taxon>
        <taxon>Bacillati</taxon>
        <taxon>Bacillota</taxon>
        <taxon>Bacilli</taxon>
        <taxon>Bacillales</taxon>
        <taxon>Bacillaceae</taxon>
        <taxon>Bacillus</taxon>
    </lineage>
</organism>
<name>ARGB_BACLD</name>
<feature type="chain" id="PRO_0000112584" description="Acetylglutamate kinase">
    <location>
        <begin position="1"/>
        <end position="258"/>
    </location>
</feature>
<feature type="binding site" evidence="1">
    <location>
        <begin position="41"/>
        <end position="42"/>
    </location>
    <ligand>
        <name>substrate</name>
    </ligand>
</feature>
<feature type="binding site" evidence="1">
    <location>
        <position position="63"/>
    </location>
    <ligand>
        <name>substrate</name>
    </ligand>
</feature>
<feature type="binding site" evidence="1">
    <location>
        <position position="156"/>
    </location>
    <ligand>
        <name>substrate</name>
    </ligand>
</feature>
<feature type="site" description="Transition state stabilizer" evidence="1">
    <location>
        <position position="8"/>
    </location>
</feature>
<feature type="site" description="Transition state stabilizer" evidence="1">
    <location>
        <position position="215"/>
    </location>
</feature>
<protein>
    <recommendedName>
        <fullName evidence="1">Acetylglutamate kinase</fullName>
        <ecNumber evidence="1">2.7.2.8</ecNumber>
    </recommendedName>
    <alternativeName>
        <fullName evidence="1">N-acetyl-L-glutamate 5-phosphotransferase</fullName>
    </alternativeName>
    <alternativeName>
        <fullName evidence="1">NAG kinase</fullName>
        <shortName evidence="1">NAGK</shortName>
    </alternativeName>
</protein>
<accession>Q65LE8</accession>
<accession>Q62WT8</accession>
<dbReference type="EC" id="2.7.2.8" evidence="1"/>
<dbReference type="EMBL" id="AE017333">
    <property type="protein sequence ID" value="AAU40116.1"/>
    <property type="molecule type" value="Genomic_DNA"/>
</dbReference>
<dbReference type="EMBL" id="CP000002">
    <property type="protein sequence ID" value="AAU22770.1"/>
    <property type="molecule type" value="Genomic_DNA"/>
</dbReference>
<dbReference type="RefSeq" id="WP_003180560.1">
    <property type="nucleotide sequence ID" value="NC_006322.1"/>
</dbReference>
<dbReference type="SMR" id="Q65LE8"/>
<dbReference type="STRING" id="279010.BL03243"/>
<dbReference type="GeneID" id="92862209"/>
<dbReference type="KEGG" id="bld:BLi01208"/>
<dbReference type="KEGG" id="bli:BL03243"/>
<dbReference type="eggNOG" id="COG0548">
    <property type="taxonomic scope" value="Bacteria"/>
</dbReference>
<dbReference type="HOGENOM" id="CLU_053680_0_0_9"/>
<dbReference type="UniPathway" id="UPA00068">
    <property type="reaction ID" value="UER00107"/>
</dbReference>
<dbReference type="Proteomes" id="UP000000606">
    <property type="component" value="Chromosome"/>
</dbReference>
<dbReference type="GO" id="GO:0005737">
    <property type="term" value="C:cytoplasm"/>
    <property type="evidence" value="ECO:0007669"/>
    <property type="project" value="UniProtKB-SubCell"/>
</dbReference>
<dbReference type="GO" id="GO:0003991">
    <property type="term" value="F:acetylglutamate kinase activity"/>
    <property type="evidence" value="ECO:0007669"/>
    <property type="project" value="UniProtKB-UniRule"/>
</dbReference>
<dbReference type="GO" id="GO:0005524">
    <property type="term" value="F:ATP binding"/>
    <property type="evidence" value="ECO:0007669"/>
    <property type="project" value="UniProtKB-UniRule"/>
</dbReference>
<dbReference type="GO" id="GO:0042450">
    <property type="term" value="P:arginine biosynthetic process via ornithine"/>
    <property type="evidence" value="ECO:0007669"/>
    <property type="project" value="UniProtKB-UniRule"/>
</dbReference>
<dbReference type="GO" id="GO:0006526">
    <property type="term" value="P:L-arginine biosynthetic process"/>
    <property type="evidence" value="ECO:0007669"/>
    <property type="project" value="UniProtKB-UniPathway"/>
</dbReference>
<dbReference type="CDD" id="cd04238">
    <property type="entry name" value="AAK_NAGK-like"/>
    <property type="match status" value="1"/>
</dbReference>
<dbReference type="FunFam" id="3.40.1160.10:FF:000004">
    <property type="entry name" value="Acetylglutamate kinase"/>
    <property type="match status" value="1"/>
</dbReference>
<dbReference type="Gene3D" id="3.40.1160.10">
    <property type="entry name" value="Acetylglutamate kinase-like"/>
    <property type="match status" value="1"/>
</dbReference>
<dbReference type="HAMAP" id="MF_00082">
    <property type="entry name" value="ArgB"/>
    <property type="match status" value="1"/>
</dbReference>
<dbReference type="InterPro" id="IPR036393">
    <property type="entry name" value="AceGlu_kinase-like_sf"/>
</dbReference>
<dbReference type="InterPro" id="IPR004662">
    <property type="entry name" value="AcgluKinase_fam"/>
</dbReference>
<dbReference type="InterPro" id="IPR037528">
    <property type="entry name" value="ArgB"/>
</dbReference>
<dbReference type="InterPro" id="IPR001048">
    <property type="entry name" value="Asp/Glu/Uridylate_kinase"/>
</dbReference>
<dbReference type="NCBIfam" id="TIGR00761">
    <property type="entry name" value="argB"/>
    <property type="match status" value="1"/>
</dbReference>
<dbReference type="PANTHER" id="PTHR23342">
    <property type="entry name" value="N-ACETYLGLUTAMATE SYNTHASE"/>
    <property type="match status" value="1"/>
</dbReference>
<dbReference type="PANTHER" id="PTHR23342:SF0">
    <property type="entry name" value="N-ACETYLGLUTAMATE SYNTHASE, MITOCHONDRIAL"/>
    <property type="match status" value="1"/>
</dbReference>
<dbReference type="Pfam" id="PF00696">
    <property type="entry name" value="AA_kinase"/>
    <property type="match status" value="1"/>
</dbReference>
<dbReference type="PIRSF" id="PIRSF000728">
    <property type="entry name" value="NAGK"/>
    <property type="match status" value="1"/>
</dbReference>
<dbReference type="SUPFAM" id="SSF53633">
    <property type="entry name" value="Carbamate kinase-like"/>
    <property type="match status" value="1"/>
</dbReference>